<accession>B8G458</accession>
<evidence type="ECO:0000255" key="1">
    <source>
        <dbReference type="HAMAP-Rule" id="MF_00291"/>
    </source>
</evidence>
<evidence type="ECO:0000305" key="2"/>
<feature type="chain" id="PRO_1000194328" description="Small ribosomal subunit protein uS2">
    <location>
        <begin position="1"/>
        <end position="238"/>
    </location>
</feature>
<organism>
    <name type="scientific">Chloroflexus aggregans (strain MD-66 / DSM 9485)</name>
    <dbReference type="NCBI Taxonomy" id="326427"/>
    <lineage>
        <taxon>Bacteria</taxon>
        <taxon>Bacillati</taxon>
        <taxon>Chloroflexota</taxon>
        <taxon>Chloroflexia</taxon>
        <taxon>Chloroflexales</taxon>
        <taxon>Chloroflexineae</taxon>
        <taxon>Chloroflexaceae</taxon>
        <taxon>Chloroflexus</taxon>
    </lineage>
</organism>
<sequence length="238" mass="26953">MTNQLPRVVTIRELLEAGAHFGHPTNRWNPKMKPYIFTARNGIHIIDLQKTVAGLSQAYQFITEVTARGEKILFVGTKKQAQEAVMEEAIRAGQFYINRRWLGGTLTNFATMKRRLKLLSDLEEQRDRGDFARLTKAEAAKLEEKIDRLNRVFAGLKGMDRLPGAIFIVDPRKEELAVREADKEGIPIVAMVDTNCDPDPIDYVIPCNDDAIRGIRLMTSKIADAAIEGMRRRESSQE</sequence>
<reference key="1">
    <citation type="submission" date="2008-12" db="EMBL/GenBank/DDBJ databases">
        <title>Complete sequence of Chloroflexus aggregans DSM 9485.</title>
        <authorList>
            <consortium name="US DOE Joint Genome Institute"/>
            <person name="Lucas S."/>
            <person name="Copeland A."/>
            <person name="Lapidus A."/>
            <person name="Glavina del Rio T."/>
            <person name="Dalin E."/>
            <person name="Tice H."/>
            <person name="Pitluck S."/>
            <person name="Foster B."/>
            <person name="Larimer F."/>
            <person name="Land M."/>
            <person name="Hauser L."/>
            <person name="Kyrpides N."/>
            <person name="Mikhailova N."/>
            <person name="Bryant D.A."/>
            <person name="Richardson P."/>
        </authorList>
    </citation>
    <scope>NUCLEOTIDE SEQUENCE [LARGE SCALE GENOMIC DNA]</scope>
    <source>
        <strain>MD-66 / DSM 9485</strain>
    </source>
</reference>
<name>RS2_CHLAD</name>
<comment type="similarity">
    <text evidence="1">Belongs to the universal ribosomal protein uS2 family.</text>
</comment>
<proteinExistence type="inferred from homology"/>
<keyword id="KW-0687">Ribonucleoprotein</keyword>
<keyword id="KW-0689">Ribosomal protein</keyword>
<protein>
    <recommendedName>
        <fullName evidence="1">Small ribosomal subunit protein uS2</fullName>
    </recommendedName>
    <alternativeName>
        <fullName evidence="2">30S ribosomal protein S2</fullName>
    </alternativeName>
</protein>
<dbReference type="EMBL" id="CP001337">
    <property type="protein sequence ID" value="ACL23464.1"/>
    <property type="molecule type" value="Genomic_DNA"/>
</dbReference>
<dbReference type="RefSeq" id="WP_012615830.1">
    <property type="nucleotide sequence ID" value="NC_011831.1"/>
</dbReference>
<dbReference type="SMR" id="B8G458"/>
<dbReference type="STRING" id="326427.Cagg_0525"/>
<dbReference type="KEGG" id="cag:Cagg_0525"/>
<dbReference type="eggNOG" id="COG0052">
    <property type="taxonomic scope" value="Bacteria"/>
</dbReference>
<dbReference type="HOGENOM" id="CLU_040318_1_2_0"/>
<dbReference type="OrthoDB" id="9808036at2"/>
<dbReference type="Proteomes" id="UP000002508">
    <property type="component" value="Chromosome"/>
</dbReference>
<dbReference type="GO" id="GO:0022627">
    <property type="term" value="C:cytosolic small ribosomal subunit"/>
    <property type="evidence" value="ECO:0007669"/>
    <property type="project" value="TreeGrafter"/>
</dbReference>
<dbReference type="GO" id="GO:0003735">
    <property type="term" value="F:structural constituent of ribosome"/>
    <property type="evidence" value="ECO:0007669"/>
    <property type="project" value="InterPro"/>
</dbReference>
<dbReference type="GO" id="GO:0006412">
    <property type="term" value="P:translation"/>
    <property type="evidence" value="ECO:0007669"/>
    <property type="project" value="UniProtKB-UniRule"/>
</dbReference>
<dbReference type="CDD" id="cd01425">
    <property type="entry name" value="RPS2"/>
    <property type="match status" value="1"/>
</dbReference>
<dbReference type="Gene3D" id="3.40.50.10490">
    <property type="entry name" value="Glucose-6-phosphate isomerase like protein, domain 1"/>
    <property type="match status" value="1"/>
</dbReference>
<dbReference type="Gene3D" id="1.10.287.610">
    <property type="entry name" value="Helix hairpin bin"/>
    <property type="match status" value="1"/>
</dbReference>
<dbReference type="HAMAP" id="MF_00291_B">
    <property type="entry name" value="Ribosomal_uS2_B"/>
    <property type="match status" value="1"/>
</dbReference>
<dbReference type="InterPro" id="IPR001865">
    <property type="entry name" value="Ribosomal_uS2"/>
</dbReference>
<dbReference type="InterPro" id="IPR005706">
    <property type="entry name" value="Ribosomal_uS2_bac/mit/plastid"/>
</dbReference>
<dbReference type="InterPro" id="IPR018130">
    <property type="entry name" value="Ribosomal_uS2_CS"/>
</dbReference>
<dbReference type="InterPro" id="IPR023591">
    <property type="entry name" value="Ribosomal_uS2_flav_dom_sf"/>
</dbReference>
<dbReference type="NCBIfam" id="TIGR01011">
    <property type="entry name" value="rpsB_bact"/>
    <property type="match status" value="1"/>
</dbReference>
<dbReference type="PANTHER" id="PTHR12534">
    <property type="entry name" value="30S RIBOSOMAL PROTEIN S2 PROKARYOTIC AND ORGANELLAR"/>
    <property type="match status" value="1"/>
</dbReference>
<dbReference type="PANTHER" id="PTHR12534:SF0">
    <property type="entry name" value="SMALL RIBOSOMAL SUBUNIT PROTEIN US2M"/>
    <property type="match status" value="1"/>
</dbReference>
<dbReference type="Pfam" id="PF00318">
    <property type="entry name" value="Ribosomal_S2"/>
    <property type="match status" value="1"/>
</dbReference>
<dbReference type="PRINTS" id="PR00395">
    <property type="entry name" value="RIBOSOMALS2"/>
</dbReference>
<dbReference type="SUPFAM" id="SSF52313">
    <property type="entry name" value="Ribosomal protein S2"/>
    <property type="match status" value="1"/>
</dbReference>
<dbReference type="PROSITE" id="PS00962">
    <property type="entry name" value="RIBOSOMAL_S2_1"/>
    <property type="match status" value="1"/>
</dbReference>
<dbReference type="PROSITE" id="PS00963">
    <property type="entry name" value="RIBOSOMAL_S2_2"/>
    <property type="match status" value="1"/>
</dbReference>
<gene>
    <name evidence="1" type="primary">rpsB</name>
    <name type="ordered locus">Cagg_0525</name>
</gene>